<reference key="1">
    <citation type="submission" date="2004-08" db="EMBL/GenBank/DDBJ databases">
        <title>The complete genome sequence of the Lactuca sativa (lettuce) chloroplast.</title>
        <authorList>
            <person name="Kanamoto H."/>
            <person name="Yamashita A."/>
            <person name="Okumura S."/>
            <person name="Hattori M."/>
            <person name="Tomizawa K."/>
        </authorList>
    </citation>
    <scope>NUCLEOTIDE SEQUENCE [LARGE SCALE GENOMIC DNA]</scope>
</reference>
<reference key="2">
    <citation type="submission" date="2006-01" db="EMBL/GenBank/DDBJ databases">
        <title>A comparison of the first two published chloroplast genomes in Asteraceae: Lactuca and Helianthus.</title>
        <authorList>
            <person name="Timme R.E."/>
            <person name="Kuehl J.V."/>
            <person name="Boore J.L."/>
            <person name="Jansen R.K."/>
        </authorList>
    </citation>
    <scope>NUCLEOTIDE SEQUENCE [LARGE SCALE GENOMIC DNA]</scope>
</reference>
<comment type="function">
    <text evidence="1">NDH shuttles electrons from NAD(P)H:plastoquinone, via FMN and iron-sulfur (Fe-S) centers, to quinones in the photosynthetic chain and possibly in a chloroplast respiratory chain. The immediate electron acceptor for the enzyme in this species is believed to be plastoquinone. Couples the redox reaction to proton translocation, and thus conserves the redox energy in a proton gradient.</text>
</comment>
<comment type="catalytic activity">
    <reaction evidence="1">
        <text>a plastoquinone + NADH + (n+1) H(+)(in) = a plastoquinol + NAD(+) + n H(+)(out)</text>
        <dbReference type="Rhea" id="RHEA:42608"/>
        <dbReference type="Rhea" id="RHEA-COMP:9561"/>
        <dbReference type="Rhea" id="RHEA-COMP:9562"/>
        <dbReference type="ChEBI" id="CHEBI:15378"/>
        <dbReference type="ChEBI" id="CHEBI:17757"/>
        <dbReference type="ChEBI" id="CHEBI:57540"/>
        <dbReference type="ChEBI" id="CHEBI:57945"/>
        <dbReference type="ChEBI" id="CHEBI:62192"/>
    </reaction>
</comment>
<comment type="catalytic activity">
    <reaction evidence="1">
        <text>a plastoquinone + NADPH + (n+1) H(+)(in) = a plastoquinol + NADP(+) + n H(+)(out)</text>
        <dbReference type="Rhea" id="RHEA:42612"/>
        <dbReference type="Rhea" id="RHEA-COMP:9561"/>
        <dbReference type="Rhea" id="RHEA-COMP:9562"/>
        <dbReference type="ChEBI" id="CHEBI:15378"/>
        <dbReference type="ChEBI" id="CHEBI:17757"/>
        <dbReference type="ChEBI" id="CHEBI:57783"/>
        <dbReference type="ChEBI" id="CHEBI:58349"/>
        <dbReference type="ChEBI" id="CHEBI:62192"/>
    </reaction>
</comment>
<comment type="subunit">
    <text evidence="1">NDH is composed of at least 16 different subunits, 5 of which are encoded in the nucleus.</text>
</comment>
<comment type="subcellular location">
    <subcellularLocation>
        <location evidence="1">Plastid</location>
        <location evidence="1">Chloroplast thylakoid membrane</location>
        <topology evidence="1">Peripheral membrane protein</topology>
        <orientation evidence="1">Stromal side</orientation>
    </subcellularLocation>
</comment>
<comment type="similarity">
    <text evidence="1">Belongs to the complex I 49 kDa subunit family.</text>
</comment>
<proteinExistence type="inferred from homology"/>
<organism>
    <name type="scientific">Lactuca sativa</name>
    <name type="common">Garden lettuce</name>
    <dbReference type="NCBI Taxonomy" id="4236"/>
    <lineage>
        <taxon>Eukaryota</taxon>
        <taxon>Viridiplantae</taxon>
        <taxon>Streptophyta</taxon>
        <taxon>Embryophyta</taxon>
        <taxon>Tracheophyta</taxon>
        <taxon>Spermatophyta</taxon>
        <taxon>Magnoliopsida</taxon>
        <taxon>eudicotyledons</taxon>
        <taxon>Gunneridae</taxon>
        <taxon>Pentapetalae</taxon>
        <taxon>asterids</taxon>
        <taxon>campanulids</taxon>
        <taxon>Asterales</taxon>
        <taxon>Asteraceae</taxon>
        <taxon>Cichorioideae</taxon>
        <taxon>Cichorieae</taxon>
        <taxon>Lactucinae</taxon>
        <taxon>Lactuca</taxon>
    </lineage>
</organism>
<keyword id="KW-0150">Chloroplast</keyword>
<keyword id="KW-0472">Membrane</keyword>
<keyword id="KW-0520">NAD</keyword>
<keyword id="KW-0521">NADP</keyword>
<keyword id="KW-0934">Plastid</keyword>
<keyword id="KW-0618">Plastoquinone</keyword>
<keyword id="KW-0874">Quinone</keyword>
<keyword id="KW-0793">Thylakoid</keyword>
<keyword id="KW-1278">Translocase</keyword>
<keyword id="KW-0813">Transport</keyword>
<evidence type="ECO:0000255" key="1">
    <source>
        <dbReference type="HAMAP-Rule" id="MF_01358"/>
    </source>
</evidence>
<accession>Q332S1</accession>
<sequence>MTGPATRKDLMIVNMGPHHPSMHGVLRLIVTLDGEDVIDCEPILGYLHRGMEKIAENRTIIQYLPYVTRWDYLATMFTEAITVNAPEQLGNIQVPKRASYIRVIMLELSRIASHLLWLGPFMADIGAQTPFFYIFRERELIYDLFEAATGMRMMHNFFRIGGIAADLPHGWIDKCLDFCDYFLTGIAEYQKLITRNPIFLERVEGVGIIGGEEAINWGLSGPMLRASGIQWDLRKVDHYECYDEFDWEVQWQNEGDSLARYLVRISEMTESIKIIQQALEGIPGGPYENLEIRRFDRVKDTVWNEFDYRFISKKPSPTFELSKQELYARVEAPKGELGIFLIGDKGVFPWRYKIRPPGFINLQILPQLVKRMKLADIMTILGSIDIIMGEVDR</sequence>
<name>NDHH_LACSA</name>
<protein>
    <recommendedName>
        <fullName evidence="1">NAD(P)H-quinone oxidoreductase subunit H, chloroplastic</fullName>
        <ecNumber evidence="1">7.1.1.-</ecNumber>
    </recommendedName>
    <alternativeName>
        <fullName>NAD(P)H dehydrogenase subunit H</fullName>
    </alternativeName>
    <alternativeName>
        <fullName evidence="1">NADH-plastoquinone oxidoreductase 49 kDa subunit</fullName>
    </alternativeName>
    <alternativeName>
        <fullName evidence="1">NADH-plastoquinone oxidoreductase subunit H</fullName>
    </alternativeName>
</protein>
<geneLocation type="chloroplast"/>
<feature type="chain" id="PRO_0000357998" description="NAD(P)H-quinone oxidoreductase subunit H, chloroplastic">
    <location>
        <begin position="1"/>
        <end position="393"/>
    </location>
</feature>
<dbReference type="EC" id="7.1.1.-" evidence="1"/>
<dbReference type="EMBL" id="DQ383816">
    <property type="protein sequence ID" value="ABD47282.1"/>
    <property type="molecule type" value="Genomic_DNA"/>
</dbReference>
<dbReference type="EMBL" id="AP007232">
    <property type="protein sequence ID" value="BAE47651.1"/>
    <property type="molecule type" value="Genomic_DNA"/>
</dbReference>
<dbReference type="RefSeq" id="YP_398384.1">
    <property type="nucleotide sequence ID" value="NC_007578.1"/>
</dbReference>
<dbReference type="SMR" id="Q332S1"/>
<dbReference type="GeneID" id="3772858"/>
<dbReference type="KEGG" id="lsv:3772858"/>
<dbReference type="OrthoDB" id="1845069at2759"/>
<dbReference type="GO" id="GO:0009535">
    <property type="term" value="C:chloroplast thylakoid membrane"/>
    <property type="evidence" value="ECO:0007669"/>
    <property type="project" value="UniProtKB-SubCell"/>
</dbReference>
<dbReference type="GO" id="GO:0051287">
    <property type="term" value="F:NAD binding"/>
    <property type="evidence" value="ECO:0007669"/>
    <property type="project" value="InterPro"/>
</dbReference>
<dbReference type="GO" id="GO:0016655">
    <property type="term" value="F:oxidoreductase activity, acting on NAD(P)H, quinone or similar compound as acceptor"/>
    <property type="evidence" value="ECO:0007669"/>
    <property type="project" value="UniProtKB-UniRule"/>
</dbReference>
<dbReference type="GO" id="GO:0048038">
    <property type="term" value="F:quinone binding"/>
    <property type="evidence" value="ECO:0007669"/>
    <property type="project" value="UniProtKB-KW"/>
</dbReference>
<dbReference type="GO" id="GO:0019684">
    <property type="term" value="P:photosynthesis, light reaction"/>
    <property type="evidence" value="ECO:0007669"/>
    <property type="project" value="UniProtKB-UniRule"/>
</dbReference>
<dbReference type="FunFam" id="1.10.645.10:FF:000003">
    <property type="entry name" value="NAD(P)H-quinone oxidoreductase subunit H, chloroplastic"/>
    <property type="match status" value="1"/>
</dbReference>
<dbReference type="Gene3D" id="1.10.645.10">
    <property type="entry name" value="Cytochrome-c3 Hydrogenase, chain B"/>
    <property type="match status" value="1"/>
</dbReference>
<dbReference type="HAMAP" id="MF_01358">
    <property type="entry name" value="NDH1_NuoD"/>
    <property type="match status" value="1"/>
</dbReference>
<dbReference type="InterPro" id="IPR001135">
    <property type="entry name" value="NADH_Q_OxRdtase_suD"/>
</dbReference>
<dbReference type="InterPro" id="IPR014029">
    <property type="entry name" value="NADH_UbQ_OxRdtase_49kDa_CS"/>
</dbReference>
<dbReference type="InterPro" id="IPR022885">
    <property type="entry name" value="NDH1_su_D/H"/>
</dbReference>
<dbReference type="InterPro" id="IPR029014">
    <property type="entry name" value="NiFe-Hase_large"/>
</dbReference>
<dbReference type="NCBIfam" id="NF004739">
    <property type="entry name" value="PRK06075.1"/>
    <property type="match status" value="1"/>
</dbReference>
<dbReference type="NCBIfam" id="NF005649">
    <property type="entry name" value="PRK07415.1"/>
    <property type="match status" value="1"/>
</dbReference>
<dbReference type="PANTHER" id="PTHR11993:SF10">
    <property type="entry name" value="NADH DEHYDROGENASE [UBIQUINONE] IRON-SULFUR PROTEIN 2, MITOCHONDRIAL"/>
    <property type="match status" value="1"/>
</dbReference>
<dbReference type="PANTHER" id="PTHR11993">
    <property type="entry name" value="NADH-UBIQUINONE OXIDOREDUCTASE 49 KDA SUBUNIT"/>
    <property type="match status" value="1"/>
</dbReference>
<dbReference type="Pfam" id="PF00346">
    <property type="entry name" value="Complex1_49kDa"/>
    <property type="match status" value="1"/>
</dbReference>
<dbReference type="SUPFAM" id="SSF56762">
    <property type="entry name" value="HydB/Nqo4-like"/>
    <property type="match status" value="1"/>
</dbReference>
<dbReference type="PROSITE" id="PS00535">
    <property type="entry name" value="COMPLEX1_49K"/>
    <property type="match status" value="1"/>
</dbReference>
<gene>
    <name evidence="1" type="primary">ndhH</name>
</gene>